<keyword id="KW-0450">Lipoyl</keyword>
<organism>
    <name type="scientific">Burkholderia orbicola (strain AU 1054)</name>
    <dbReference type="NCBI Taxonomy" id="331271"/>
    <lineage>
        <taxon>Bacteria</taxon>
        <taxon>Pseudomonadati</taxon>
        <taxon>Pseudomonadota</taxon>
        <taxon>Betaproteobacteria</taxon>
        <taxon>Burkholderiales</taxon>
        <taxon>Burkholderiaceae</taxon>
        <taxon>Burkholderia</taxon>
        <taxon>Burkholderia cepacia complex</taxon>
        <taxon>Burkholderia orbicola</taxon>
    </lineage>
</organism>
<gene>
    <name evidence="1" type="primary">gcvH</name>
    <name type="ordered locus">Bcen_2910</name>
</gene>
<accession>Q1BRE9</accession>
<evidence type="ECO:0000255" key="1">
    <source>
        <dbReference type="HAMAP-Rule" id="MF_00272"/>
    </source>
</evidence>
<evidence type="ECO:0000255" key="2">
    <source>
        <dbReference type="PROSITE-ProRule" id="PRU01066"/>
    </source>
</evidence>
<protein>
    <recommendedName>
        <fullName evidence="1">Glycine cleavage system H protein</fullName>
    </recommendedName>
</protein>
<reference key="1">
    <citation type="submission" date="2006-05" db="EMBL/GenBank/DDBJ databases">
        <title>Complete sequence of chromosome 1 of Burkholderia cenocepacia AU 1054.</title>
        <authorList>
            <consortium name="US DOE Joint Genome Institute"/>
            <person name="Copeland A."/>
            <person name="Lucas S."/>
            <person name="Lapidus A."/>
            <person name="Barry K."/>
            <person name="Detter J.C."/>
            <person name="Glavina del Rio T."/>
            <person name="Hammon N."/>
            <person name="Israni S."/>
            <person name="Dalin E."/>
            <person name="Tice H."/>
            <person name="Pitluck S."/>
            <person name="Chain P."/>
            <person name="Malfatti S."/>
            <person name="Shin M."/>
            <person name="Vergez L."/>
            <person name="Schmutz J."/>
            <person name="Larimer F."/>
            <person name="Land M."/>
            <person name="Hauser L."/>
            <person name="Kyrpides N."/>
            <person name="Lykidis A."/>
            <person name="LiPuma J.J."/>
            <person name="Konstantinidis K."/>
            <person name="Tiedje J.M."/>
            <person name="Richardson P."/>
        </authorList>
    </citation>
    <scope>NUCLEOTIDE SEQUENCE [LARGE SCALE GENOMIC DNA]</scope>
    <source>
        <strain>AU 1054</strain>
    </source>
</reference>
<dbReference type="EMBL" id="CP000378">
    <property type="protein sequence ID" value="ABF77806.1"/>
    <property type="molecule type" value="Genomic_DNA"/>
</dbReference>
<dbReference type="SMR" id="Q1BRE9"/>
<dbReference type="HOGENOM" id="CLU_097408_2_1_4"/>
<dbReference type="GO" id="GO:0005829">
    <property type="term" value="C:cytosol"/>
    <property type="evidence" value="ECO:0007669"/>
    <property type="project" value="TreeGrafter"/>
</dbReference>
<dbReference type="GO" id="GO:0005960">
    <property type="term" value="C:glycine cleavage complex"/>
    <property type="evidence" value="ECO:0007669"/>
    <property type="project" value="InterPro"/>
</dbReference>
<dbReference type="GO" id="GO:0019464">
    <property type="term" value="P:glycine decarboxylation via glycine cleavage system"/>
    <property type="evidence" value="ECO:0007669"/>
    <property type="project" value="UniProtKB-UniRule"/>
</dbReference>
<dbReference type="CDD" id="cd06848">
    <property type="entry name" value="GCS_H"/>
    <property type="match status" value="1"/>
</dbReference>
<dbReference type="Gene3D" id="2.40.50.100">
    <property type="match status" value="1"/>
</dbReference>
<dbReference type="HAMAP" id="MF_00272">
    <property type="entry name" value="GcvH"/>
    <property type="match status" value="1"/>
</dbReference>
<dbReference type="InterPro" id="IPR003016">
    <property type="entry name" value="2-oxoA_DH_lipoyl-BS"/>
</dbReference>
<dbReference type="InterPro" id="IPR000089">
    <property type="entry name" value="Biotin_lipoyl"/>
</dbReference>
<dbReference type="InterPro" id="IPR002930">
    <property type="entry name" value="GCV_H"/>
</dbReference>
<dbReference type="InterPro" id="IPR033753">
    <property type="entry name" value="GCV_H/Fam206"/>
</dbReference>
<dbReference type="InterPro" id="IPR017453">
    <property type="entry name" value="GCV_H_sub"/>
</dbReference>
<dbReference type="InterPro" id="IPR011053">
    <property type="entry name" value="Single_hybrid_motif"/>
</dbReference>
<dbReference type="NCBIfam" id="TIGR00527">
    <property type="entry name" value="gcvH"/>
    <property type="match status" value="1"/>
</dbReference>
<dbReference type="NCBIfam" id="NF002270">
    <property type="entry name" value="PRK01202.1"/>
    <property type="match status" value="1"/>
</dbReference>
<dbReference type="PANTHER" id="PTHR11715">
    <property type="entry name" value="GLYCINE CLEAVAGE SYSTEM H PROTEIN"/>
    <property type="match status" value="1"/>
</dbReference>
<dbReference type="PANTHER" id="PTHR11715:SF3">
    <property type="entry name" value="GLYCINE CLEAVAGE SYSTEM H PROTEIN-RELATED"/>
    <property type="match status" value="1"/>
</dbReference>
<dbReference type="Pfam" id="PF01597">
    <property type="entry name" value="GCV_H"/>
    <property type="match status" value="1"/>
</dbReference>
<dbReference type="SUPFAM" id="SSF51230">
    <property type="entry name" value="Single hybrid motif"/>
    <property type="match status" value="1"/>
</dbReference>
<dbReference type="PROSITE" id="PS50968">
    <property type="entry name" value="BIOTINYL_LIPOYL"/>
    <property type="match status" value="1"/>
</dbReference>
<dbReference type="PROSITE" id="PS00189">
    <property type="entry name" value="LIPOYL"/>
    <property type="match status" value="1"/>
</dbReference>
<name>GCSH_BURO1</name>
<sequence length="126" mass="13226">MSNVPADLKYTDEHEWIRTEADGTLTVGITDHAQSTLGDIVFLELPEVGKSVNAGDAVGVVESVKAASDIYSPVSGEVVAVNEAATDAPEEVNGDAYGVWLFKIKLAAGASTDKLIDADAYSKLID</sequence>
<proteinExistence type="inferred from homology"/>
<comment type="function">
    <text evidence="1">The glycine cleavage system catalyzes the degradation of glycine. The H protein shuttles the methylamine group of glycine from the P protein to the T protein.</text>
</comment>
<comment type="cofactor">
    <cofactor evidence="1">
        <name>(R)-lipoate</name>
        <dbReference type="ChEBI" id="CHEBI:83088"/>
    </cofactor>
    <text evidence="1">Binds 1 lipoyl cofactor covalently.</text>
</comment>
<comment type="subunit">
    <text evidence="1">The glycine cleavage system is composed of four proteins: P, T, L and H.</text>
</comment>
<comment type="similarity">
    <text evidence="1">Belongs to the GcvH family.</text>
</comment>
<feature type="chain" id="PRO_0000302360" description="Glycine cleavage system H protein">
    <location>
        <begin position="1"/>
        <end position="126"/>
    </location>
</feature>
<feature type="domain" description="Lipoyl-binding" evidence="2">
    <location>
        <begin position="24"/>
        <end position="105"/>
    </location>
</feature>
<feature type="modified residue" description="N6-lipoyllysine" evidence="1">
    <location>
        <position position="65"/>
    </location>
</feature>